<comment type="function">
    <text evidence="2 12 13 14 18 21">Cell surface receptor for Reelin (RELN) and apolipoprotein E (apoE)-containing ligands (PubMed:12899622, PubMed:12950167, PubMed:20223215, PubMed:30873003). LRP8 participates in transmitting the extracellular Reelin signal to intracellular signaling processes, by binding to DAB1 on its cytoplasmic tail (By similarity). Reelin acts via both the VLDL receptor (VLDLR) and LRP8 to regulate DAB1 tyrosine phosphorylation and microtubule function in neurons (By similarity). LRP8 has higher affinity for Reelin than VLDLR (By similarity). LRP8 is thus a key component of the Reelin pathway which governs neuronal layering of the forebrain during embryonic brain development (By similarity). Binds the endoplasmic reticulum resident receptor-associated protein (RAP) (By similarity). Binds dimers of beta 2-glycoprotein I and may be involved in the suppression of platelet aggregation in the vasculature (PubMed:12807892). Highly expressed in the initial segment of the epididymis, where it affects the functional expression of clusterin and phospholipid hydroperoxide glutathione peroxidase (PHGPx), two proteins required for sperm maturation (By similarity). May also function as an endocytic receptor (By similarity). Not required for endocytic uptake of SEPP1 in the kidney which is mediated by LRP2 (By similarity). Together with its ligand, apolipoprotein E (apoE), may indirectly play a role in the suppression of the innate immune response by controlling the survival of myeloid-derived suppressor cells (By similarity).</text>
</comment>
<comment type="function">
    <text evidence="22">(Microbial infection) Acts as a receptor for Semliki Forest virus.</text>
</comment>
<comment type="subunit">
    <text evidence="1 2 17 18 20 21">Homooligomer (PubMed:30873003). Interacts with VLDLR (PubMed:30873003). Reelin associates with two or more receptor molecules (PubMed:20223215). Interacts with DAB1 and JNK-interacting proteins. Interacts with SNX17 (By similarity). Interacts with PCSK9. Interacts with MDK; this interaction is calcium dependent (By similarity). Interacts with CLU (PubMed:24381170).</text>
</comment>
<comment type="subunit">
    <text evidence="22">(Microbial infection) Interacts with Semliki Forest virus E2-E1 heterodimer; this interaction mediates viral entry to host cell.</text>
</comment>
<comment type="subunit">
    <text evidence="23">(Microbial infection) Interacts (via class A repeats) with Eastern equine encephalitis virus spike glycoprotein E2; this interaction mediates viral entry into host cell.</text>
</comment>
<comment type="interaction">
    <interactant intactId="EBI-2681187">
        <id>Q14114</id>
    </interactant>
    <interactant intactId="EBI-727707">
        <id>P25054</id>
        <label>APC</label>
    </interactant>
    <organismsDiffer>false</organismsDiffer>
    <experiments>2</experiments>
</comment>
<comment type="interaction">
    <interactant intactId="EBI-2681187">
        <id>Q14114</id>
    </interactant>
    <interactant intactId="EBI-1222467">
        <id>P02649</id>
        <label>APOE</label>
    </interactant>
    <organismsDiffer>false</organismsDiffer>
    <experiments>2</experiments>
</comment>
<comment type="interaction">
    <interactant intactId="EBI-2681187">
        <id>Q14114</id>
    </interactant>
    <interactant intactId="EBI-715927">
        <id>P30533</id>
        <label>LRPAP1</label>
    </interactant>
    <organismsDiffer>false</organismsDiffer>
    <experiments>2</experiments>
</comment>
<comment type="interaction">
    <interactant intactId="EBI-2681187">
        <id>Q14114</id>
    </interactant>
    <interactant intactId="EBI-9248666">
        <id>Q60841</id>
        <label>Reln</label>
    </interactant>
    <organismsDiffer>true</organismsDiffer>
    <experiments>10</experiments>
</comment>
<comment type="interaction">
    <interactant intactId="EBI-25832196">
        <id>Q14114-3</id>
    </interactant>
    <interactant intactId="EBI-25646567">
        <id>Q06481-5</id>
        <label>APLP2</label>
    </interactant>
    <organismsDiffer>false</organismsDiffer>
    <experiments>3</experiments>
</comment>
<comment type="interaction">
    <interactant intactId="EBI-25832196">
        <id>Q14114-3</id>
    </interactant>
    <interactant intactId="EBI-1222467">
        <id>P02649</id>
        <label>APOE</label>
    </interactant>
    <organismsDiffer>false</organismsDiffer>
    <experiments>3</experiments>
</comment>
<comment type="interaction">
    <interactant intactId="EBI-25832196">
        <id>Q14114-3</id>
    </interactant>
    <interactant intactId="EBI-713677">
        <id>Q9UGL9</id>
        <label>CRCT1</label>
    </interactant>
    <organismsDiffer>false</organismsDiffer>
    <experiments>3</experiments>
</comment>
<comment type="interaction">
    <interactant intactId="EBI-25832196">
        <id>Q14114-3</id>
    </interactant>
    <interactant intactId="EBI-9087876">
        <id>P48730-2</id>
        <label>CSNK1D</label>
    </interactant>
    <organismsDiffer>false</organismsDiffer>
    <experiments>3</experiments>
</comment>
<comment type="interaction">
    <interactant intactId="EBI-25832196">
        <id>Q14114-3</id>
    </interactant>
    <interactant intactId="EBI-491549">
        <id>P35222</id>
        <label>CTNNB1</label>
    </interactant>
    <organismsDiffer>false</organismsDiffer>
    <experiments>3</experiments>
</comment>
<comment type="interaction">
    <interactant intactId="EBI-25832196">
        <id>Q14114-3</id>
    </interactant>
    <interactant intactId="EBI-25903400">
        <id>Q9UJY5-5</id>
        <label>GGA1</label>
    </interactant>
    <organismsDiffer>false</organismsDiffer>
    <experiments>3</experiments>
</comment>
<comment type="interaction">
    <interactant intactId="EBI-25832196">
        <id>Q14114-3</id>
    </interactant>
    <interactant intactId="EBI-20795332">
        <id>Q92993-2</id>
        <label>KAT5</label>
    </interactant>
    <organismsDiffer>false</organismsDiffer>
    <experiments>3</experiments>
</comment>
<comment type="interaction">
    <interactant intactId="EBI-25832196">
        <id>Q14114-3</id>
    </interactant>
    <interactant intactId="EBI-476263">
        <id>Q99683</id>
        <label>MAP3K5</label>
    </interactant>
    <organismsDiffer>false</organismsDiffer>
    <experiments>3</experiments>
</comment>
<comment type="interaction">
    <interactant intactId="EBI-25832196">
        <id>Q14114-3</id>
    </interactant>
    <interactant intactId="EBI-15098952">
        <id>Q96P71-2</id>
        <label>NECAB3</label>
    </interactant>
    <organismsDiffer>false</organismsDiffer>
    <experiments>3</experiments>
</comment>
<comment type="interaction">
    <interactant intactId="EBI-25832196">
        <id>Q14114-3</id>
    </interactant>
    <interactant intactId="EBI-10178578">
        <id>I6L9F6</id>
        <label>NEFL</label>
    </interactant>
    <organismsDiffer>false</organismsDiffer>
    <experiments>3</experiments>
</comment>
<comment type="interaction">
    <interactant intactId="EBI-25832196">
        <id>Q14114-3</id>
    </interactant>
    <interactant intactId="EBI-594644">
        <id>P10599</id>
        <label>TXN</label>
    </interactant>
    <organismsDiffer>false</organismsDiffer>
    <experiments>3</experiments>
</comment>
<comment type="subcellular location">
    <subcellularLocation>
        <location evidence="21">Cell membrane</location>
        <topology evidence="3">Single-pass type I membrane protein</topology>
    </subcellularLocation>
    <subcellularLocation>
        <location evidence="2">Secreted</location>
    </subcellularLocation>
    <text evidence="2">Isoforms that contain the exon coding for a furin-type cleavage site are proteolytically processed, leading to a secreted receptor fragment.</text>
</comment>
<comment type="alternative products">
    <event type="alternative splicing"/>
    <isoform>
        <id>Q14114-1</id>
        <name>1</name>
        <name>ApoER2 922</name>
        <sequence type="displayed"/>
    </isoform>
    <isoform>
        <id>Q14114-2</id>
        <name>2</name>
        <name>ApoER2 906</name>
        <sequence type="described" ref="VSP_010305 VSP_010307 VSP_010308"/>
    </isoform>
    <isoform>
        <id>Q14114-3</id>
        <name>3</name>
        <sequence type="described" ref="VSP_010308"/>
    </isoform>
    <isoform>
        <id>Q14114-4</id>
        <name>4</name>
        <name>ApoER2delta4-7</name>
        <sequence type="described" ref="VSP_038181 VSP_010306"/>
    </isoform>
    <isoform>
        <id>Q14114-5</id>
        <name>5</name>
        <sequence type="not described"/>
    </isoform>
    <text>Additional isoforms seem to exist. No differences were observed in the pattern splicing between control and Alzheimer brains.</text>
</comment>
<comment type="tissue specificity">
    <text evidence="7 8">Expressed mainly in brain and placenta. Also expressed in platelets and megakaryocytic cells. Not expressed in the liver.</text>
</comment>
<comment type="domain">
    <text evidence="2">The cytoplasmic domain is involved in the binding of DAB1 and in the recruitment of JNK-interacting proteins. Isoforms, which lack part of the cytoplasmic domain, are unable to recruit members of the family of JNK interacting proteins (JIP) to the cytoplasmic tail (By similarity).</text>
</comment>
<comment type="PTM">
    <text evidence="2">O-glycosylated. Some alternatively spliced isoforms lack the O-linked sugar domain (By similarity).</text>
</comment>
<comment type="PTM">
    <text evidence="2">Undergoes sequential, furin and gamma-secretase dependent, proteolytic processing, resulting in the extracellular release of the entire ligand-binding domain as a soluble polypeptide and in the intracellular domain (ICD) release into the cytoplasm. The gamma-secretase-dependent proteolytical processing occurs after the bulk of the extracellular domain has been shed, in a furin-dependent manner, in alternatively spliced isoforms carrying the furin cleavage site. Hypoglycosylation (mainly hypo-O-glycosylation) leads to increased extracellular cleavage, which in turn results in accelerating release of the intracellular domain (ICD) by the gamma-secretase. The resulting receptor fragment is able to inhibit Reelin signaling and in particular the Reelin-induced DAB1 phosphorylation (By similarity).</text>
</comment>
<comment type="PTM">
    <text evidence="11">Tyrosine phosphorylated upon apoE binding.</text>
</comment>
<comment type="PTM">
    <text evidence="19">Ubiquitinated by MYLIP leading to degradation.</text>
</comment>
<comment type="disease" evidence="16">
    <disease id="DI-02017">
        <name>Myocardial infarction 1</name>
        <acronym>MCI1</acronym>
        <description>A condition defined by the irreversible necrosis of heart muscle secondary to prolonged ischemia.</description>
        <dbReference type="MIM" id="608446"/>
    </disease>
    <text>The disease is caused by variants affecting the gene represented in this entry.</text>
</comment>
<comment type="miscellaneous">
    <text>Natural isoforms of apoE (E2, E3, E4) have similar affinities for LRP8.</text>
</comment>
<comment type="miscellaneous">
    <molecule>Isoform 5</molecule>
    <text evidence="28">Contains an insert in the extracellular part which carries a furin cleavage site.</text>
</comment>
<comment type="similarity">
    <text evidence="28">Belongs to the LDLR family.</text>
</comment>
<comment type="sequence caution" evidence="28">
    <conflict type="frameshift">
        <sequence resource="EMBL-CDS" id="CAA99509"/>
    </conflict>
</comment>
<feature type="signal peptide" evidence="3">
    <location>
        <begin position="1"/>
        <end position="32"/>
    </location>
</feature>
<feature type="chain" id="PRO_0000017332" description="Low-density lipoprotein receptor-related protein 8">
    <location>
        <begin position="33"/>
        <end position="963"/>
    </location>
</feature>
<feature type="topological domain" description="Extracellular" evidence="3">
    <location>
        <begin position="42"/>
        <end position="826"/>
    </location>
</feature>
<feature type="transmembrane region" description="Helical" evidence="3">
    <location>
        <begin position="827"/>
        <end position="847"/>
    </location>
</feature>
<feature type="topological domain" description="Cytoplasmic" evidence="3">
    <location>
        <begin position="848"/>
        <end position="963"/>
    </location>
</feature>
<feature type="domain" description="LDL-receptor class A 1" evidence="5">
    <location>
        <begin position="46"/>
        <end position="82"/>
    </location>
</feature>
<feature type="domain" description="LDL-receptor class A 2" evidence="5">
    <location>
        <begin position="85"/>
        <end position="123"/>
    </location>
</feature>
<feature type="domain" description="LDL-receptor class A 3" evidence="5">
    <location>
        <begin position="126"/>
        <end position="164"/>
    </location>
</feature>
<feature type="domain" description="LDL-receptor class A 4" evidence="5">
    <location>
        <begin position="166"/>
        <end position="202"/>
    </location>
</feature>
<feature type="domain" description="LDL-receptor class A 5" evidence="5">
    <location>
        <begin position="205"/>
        <end position="246"/>
    </location>
</feature>
<feature type="domain" description="LDL-receptor class A 6" evidence="5">
    <location>
        <begin position="258"/>
        <end position="295"/>
    </location>
</feature>
<feature type="domain" description="LDL-receptor class A 7" evidence="5">
    <location>
        <begin position="298"/>
        <end position="334"/>
    </location>
</feature>
<feature type="domain" description="EGF-like 1" evidence="4">
    <location>
        <begin position="336"/>
        <end position="375"/>
    </location>
</feature>
<feature type="domain" description="EGF-like 2; calcium-binding" evidence="4">
    <location>
        <begin position="376"/>
        <end position="415"/>
    </location>
</feature>
<feature type="repeat" description="LDL-receptor class B 1">
    <location>
        <begin position="462"/>
        <end position="508"/>
    </location>
</feature>
<feature type="repeat" description="LDL-receptor class B 2">
    <location>
        <begin position="509"/>
        <end position="551"/>
    </location>
</feature>
<feature type="repeat" description="LDL-receptor class B 3">
    <location>
        <begin position="552"/>
        <end position="595"/>
    </location>
</feature>
<feature type="repeat" description="LDL-receptor class B 4">
    <location>
        <begin position="596"/>
        <end position="639"/>
    </location>
</feature>
<feature type="repeat" description="LDL-receptor class B 5">
    <location>
        <begin position="640"/>
        <end position="681"/>
    </location>
</feature>
<feature type="region of interest" description="Clustered O-linked oligosaccharides">
    <location>
        <begin position="740"/>
        <end position="798"/>
    </location>
</feature>
<feature type="region of interest" description="Disordered" evidence="6">
    <location>
        <begin position="754"/>
        <end position="815"/>
    </location>
</feature>
<feature type="compositionally biased region" description="Polar residues" evidence="6">
    <location>
        <begin position="765"/>
        <end position="777"/>
    </location>
</feature>
<feature type="compositionally biased region" description="Low complexity" evidence="6">
    <location>
        <begin position="778"/>
        <end position="799"/>
    </location>
</feature>
<feature type="compositionally biased region" description="Polar residues" evidence="6">
    <location>
        <begin position="800"/>
        <end position="812"/>
    </location>
</feature>
<feature type="binding site" evidence="18 29">
    <location>
        <position position="64"/>
    </location>
    <ligand>
        <name>Ca(2+)</name>
        <dbReference type="ChEBI" id="CHEBI:29108"/>
    </ligand>
</feature>
<feature type="binding site" evidence="18 29">
    <location>
        <position position="67"/>
    </location>
    <ligand>
        <name>Ca(2+)</name>
        <dbReference type="ChEBI" id="CHEBI:29108"/>
    </ligand>
</feature>
<feature type="binding site" evidence="18 29">
    <location>
        <position position="69"/>
    </location>
    <ligand>
        <name>Ca(2+)</name>
        <dbReference type="ChEBI" id="CHEBI:29108"/>
    </ligand>
</feature>
<feature type="binding site" evidence="18 29">
    <location>
        <position position="71"/>
    </location>
    <ligand>
        <name>Ca(2+)</name>
        <dbReference type="ChEBI" id="CHEBI:29108"/>
    </ligand>
</feature>
<feature type="binding site" evidence="18 29">
    <location>
        <position position="77"/>
    </location>
    <ligand>
        <name>Ca(2+)</name>
        <dbReference type="ChEBI" id="CHEBI:29108"/>
    </ligand>
</feature>
<feature type="binding site" evidence="18 29">
    <location>
        <position position="78"/>
    </location>
    <ligand>
        <name>Ca(2+)</name>
        <dbReference type="ChEBI" id="CHEBI:29108"/>
    </ligand>
</feature>
<feature type="glycosylation site" description="N-linked (GlcNAc...) asparagine" evidence="3">
    <location>
        <position position="176"/>
    </location>
</feature>
<feature type="glycosylation site" description="N-linked (GlcNAc...) asparagine" evidence="3">
    <location>
        <position position="441"/>
    </location>
</feature>
<feature type="glycosylation site" description="N-linked (GlcNAc...) asparagine" evidence="3">
    <location>
        <position position="518"/>
    </location>
</feature>
<feature type="glycosylation site" description="N-linked (GlcNAc...) asparagine" evidence="3">
    <location>
        <position position="538"/>
    </location>
</feature>
<feature type="glycosylation site" description="N-linked (GlcNAc...) asparagine" evidence="3">
    <location>
        <position position="772"/>
    </location>
</feature>
<feature type="glycosylation site" description="N-linked (GlcNAc...) asparagine" evidence="3">
    <location>
        <position position="807"/>
    </location>
</feature>
<feature type="disulfide bond" evidence="5 18 29">
    <location>
        <begin position="47"/>
        <end position="59"/>
    </location>
</feature>
<feature type="disulfide bond" evidence="5 18 29">
    <location>
        <begin position="54"/>
        <end position="72"/>
    </location>
</feature>
<feature type="disulfide bond" evidence="5 18 29">
    <location>
        <begin position="66"/>
        <end position="81"/>
    </location>
</feature>
<feature type="disulfide bond" evidence="5">
    <location>
        <begin position="86"/>
        <end position="98"/>
    </location>
</feature>
<feature type="disulfide bond" evidence="5">
    <location>
        <begin position="93"/>
        <end position="111"/>
    </location>
</feature>
<feature type="disulfide bond" evidence="5">
    <location>
        <begin position="105"/>
        <end position="122"/>
    </location>
</feature>
<feature type="disulfide bond" evidence="5">
    <location>
        <begin position="127"/>
        <end position="141"/>
    </location>
</feature>
<feature type="disulfide bond" evidence="5">
    <location>
        <begin position="134"/>
        <end position="154"/>
    </location>
</feature>
<feature type="disulfide bond" evidence="5">
    <location>
        <begin position="148"/>
        <end position="163"/>
    </location>
</feature>
<feature type="disulfide bond" evidence="5">
    <location>
        <begin position="167"/>
        <end position="179"/>
    </location>
</feature>
<feature type="disulfide bond" evidence="5">
    <location>
        <begin position="174"/>
        <end position="192"/>
    </location>
</feature>
<feature type="disulfide bond" evidence="5">
    <location>
        <begin position="186"/>
        <end position="201"/>
    </location>
</feature>
<feature type="disulfide bond" evidence="5">
    <location>
        <begin position="206"/>
        <end position="221"/>
    </location>
</feature>
<feature type="disulfide bond" evidence="5">
    <location>
        <begin position="213"/>
        <end position="234"/>
    </location>
</feature>
<feature type="disulfide bond" evidence="5">
    <location>
        <begin position="228"/>
        <end position="245"/>
    </location>
</feature>
<feature type="disulfide bond" evidence="5">
    <location>
        <begin position="259"/>
        <end position="272"/>
    </location>
</feature>
<feature type="disulfide bond" evidence="5">
    <location>
        <begin position="267"/>
        <end position="285"/>
    </location>
</feature>
<feature type="disulfide bond" evidence="5">
    <location>
        <begin position="279"/>
        <end position="294"/>
    </location>
</feature>
<feature type="disulfide bond" evidence="5">
    <location>
        <begin position="299"/>
        <end position="311"/>
    </location>
</feature>
<feature type="disulfide bond" evidence="5">
    <location>
        <begin position="306"/>
        <end position="324"/>
    </location>
</feature>
<feature type="disulfide bond" evidence="5">
    <location>
        <begin position="318"/>
        <end position="333"/>
    </location>
</feature>
<feature type="disulfide bond" evidence="5">
    <location>
        <begin position="340"/>
        <end position="351"/>
    </location>
</feature>
<feature type="disulfide bond" evidence="5">
    <location>
        <begin position="347"/>
        <end position="360"/>
    </location>
</feature>
<feature type="disulfide bond" evidence="5">
    <location>
        <begin position="362"/>
        <end position="374"/>
    </location>
</feature>
<feature type="disulfide bond" evidence="5">
    <location>
        <begin position="380"/>
        <end position="390"/>
    </location>
</feature>
<feature type="disulfide bond" evidence="5">
    <location>
        <begin position="386"/>
        <end position="399"/>
    </location>
</feature>
<feature type="disulfide bond" evidence="5">
    <location>
        <begin position="401"/>
        <end position="414"/>
    </location>
</feature>
<feature type="splice variant" id="VSP_010305" description="In isoform 2." evidence="26">
    <original>LCAPHEFQCGNRSCLAAVFVCDGDDDCGDGSDERGCADPACGPREFRCGGDGGGACIPERWVCDRQFDCEDRSDEAAELCGRPGPGATSAPAACATASQFACRSGECVHLGWRCDGDRDCKDKSDEADCP</original>
    <variation>S</variation>
    <location>
        <begin position="166"/>
        <end position="295"/>
    </location>
</feature>
<feature type="splice variant" id="VSP_038181" description="In isoform 4." evidence="28">
    <original>L</original>
    <variation>W</variation>
    <location>
        <position position="166"/>
    </location>
</feature>
<feature type="splice variant" id="VSP_010306" description="In isoform 4." evidence="28">
    <location>
        <begin position="167"/>
        <end position="336"/>
    </location>
</feature>
<feature type="splice variant" id="VSP_010307" description="In isoform 2." evidence="26">
    <original>APQSTSTTTLASTMTRTVPATTRAPGTTVHRSTYQNHSTETPSLTAAVPSSVSVPRAPSISPSTLSPATSNHSQHY</original>
    <variation>D</variation>
    <location>
        <begin position="737"/>
        <end position="812"/>
    </location>
</feature>
<feature type="splice variant" id="VSP_010308" description="In isoform 2 and isoform 3." evidence="26 27">
    <location>
        <begin position="893"/>
        <end position="951"/>
    </location>
</feature>
<feature type="sequence variant" id="VAR_046974" description="In dbSNP:rs4926972." evidence="9 15 24 25">
    <original>Q</original>
    <variation>R</variation>
    <location>
        <position position="25"/>
    </location>
</feature>
<feature type="sequence variant" id="VAR_018468" description="In dbSNP:rs3820198." evidence="9 10 15 24 25">
    <original>D</original>
    <variation>E</variation>
    <location>
        <position position="46"/>
    </location>
</feature>
<feature type="sequence variant" id="VAR_037624" description="In dbSNP:rs5180.">
    <original>V</original>
    <variation>M</variation>
    <location>
        <position position="453"/>
    </location>
</feature>
<feature type="sequence variant" id="VAR_037625" description="In dbSNP:rs5181.">
    <original>W</original>
    <variation>C</variation>
    <location>
        <position position="466"/>
    </location>
</feature>
<feature type="sequence variant" id="VAR_037626" description="In dbSNP:rs5172.">
    <original>Q</original>
    <variation>R</variation>
    <location>
        <position position="607"/>
    </location>
</feature>
<feature type="sequence variant" id="VAR_037627" description="In dbSNP:rs5170.">
    <original>I</original>
    <variation>L</variation>
    <location>
        <position position="611"/>
    </location>
</feature>
<feature type="sequence variant" id="VAR_037628" description="In dbSNP:rs5171.">
    <original>S</original>
    <variation>T</variation>
    <location>
        <position position="653"/>
    </location>
</feature>
<feature type="sequence variant" id="VAR_059079" description="In dbSNP:rs5172.">
    <original>R</original>
    <variation>Q</variation>
    <location>
        <position position="736"/>
    </location>
</feature>
<feature type="sequence variant" id="VAR_018469" description="Risk factor for MCI1; increases activation of MAPK14 by oxidized low density lipoprotein; dbSNP:rs5174." evidence="10 16">
    <original>R</original>
    <variation>Q</variation>
    <location>
        <position position="952"/>
    </location>
</feature>
<feature type="sequence conflict" description="In Ref. 1; BAA09328 and 2; BAA21824." evidence="28" ref="1 2">
    <original>A</original>
    <variation>V</variation>
    <location>
        <position position="262"/>
    </location>
</feature>
<feature type="sequence conflict" description="In Ref. 3; CAA99509." evidence="28" ref="3">
    <original>Y</original>
    <variation>C</variation>
    <location>
        <position position="405"/>
    </location>
</feature>
<feature type="sequence conflict" description="In Ref. 1; BAA09328 and 2; BAA21824/BAA21825." evidence="28" ref="1 2">
    <original>A</original>
    <variation>G</variation>
    <location>
        <position position="418"/>
    </location>
</feature>
<feature type="sequence conflict" description="In Ref. 1; BAA09328, 2; BAA21824/BAA21825 and 3; CAA99509." evidence="28" ref="1 2 3">
    <original>H</original>
    <variation>Y</variation>
    <location>
        <position position="430"/>
    </location>
</feature>
<feature type="sequence conflict" description="In Ref. 3; CAA99509." evidence="28" ref="3">
    <original>Q</original>
    <variation>R</variation>
    <location>
        <position position="488"/>
    </location>
</feature>
<feature type="helix" evidence="32">
    <location>
        <begin position="53"/>
        <end position="56"/>
    </location>
</feature>
<feature type="strand" evidence="31">
    <location>
        <begin position="59"/>
        <end position="61"/>
    </location>
</feature>
<feature type="helix" evidence="31">
    <location>
        <begin position="62"/>
        <end position="64"/>
    </location>
</feature>
<feature type="strand" evidence="31">
    <location>
        <begin position="67"/>
        <end position="69"/>
    </location>
</feature>
<feature type="strand" evidence="31">
    <location>
        <begin position="72"/>
        <end position="75"/>
    </location>
</feature>
<feature type="helix" evidence="31">
    <location>
        <begin position="76"/>
        <end position="78"/>
    </location>
</feature>
<feature type="strand" evidence="31">
    <location>
        <begin position="88"/>
        <end position="92"/>
    </location>
</feature>
<feature type="strand" evidence="31">
    <location>
        <begin position="98"/>
        <end position="100"/>
    </location>
</feature>
<feature type="helix" evidence="31">
    <location>
        <begin position="101"/>
        <end position="103"/>
    </location>
</feature>
<feature type="strand" evidence="31">
    <location>
        <begin position="106"/>
        <end position="108"/>
    </location>
</feature>
<feature type="helix" evidence="30">
    <location>
        <begin position="115"/>
        <end position="117"/>
    </location>
</feature>
<feature type="turn" evidence="31">
    <location>
        <begin position="119"/>
        <end position="121"/>
    </location>
</feature>
<feature type="turn" evidence="30">
    <location>
        <begin position="339"/>
        <end position="341"/>
    </location>
</feature>
<feature type="helix" evidence="30">
    <location>
        <begin position="342"/>
        <end position="344"/>
    </location>
</feature>
<feature type="strand" evidence="30">
    <location>
        <begin position="348"/>
        <end position="352"/>
    </location>
</feature>
<feature type="strand" evidence="30">
    <location>
        <begin position="355"/>
        <end position="357"/>
    </location>
</feature>
<feature type="strand" evidence="30">
    <location>
        <begin position="359"/>
        <end position="361"/>
    </location>
</feature>
<feature type="strand" evidence="30">
    <location>
        <begin position="368"/>
        <end position="372"/>
    </location>
</feature>
<feature type="helix" evidence="30">
    <location>
        <begin position="379"/>
        <end position="381"/>
    </location>
</feature>
<feature type="strand" evidence="30">
    <location>
        <begin position="385"/>
        <end position="393"/>
    </location>
</feature>
<feature type="strand" evidence="30">
    <location>
        <begin position="396"/>
        <end position="400"/>
    </location>
</feature>
<feature type="strand" evidence="30">
    <location>
        <begin position="405"/>
        <end position="407"/>
    </location>
</feature>
<feature type="strand" evidence="30">
    <location>
        <begin position="409"/>
        <end position="412"/>
    </location>
</feature>
<feature type="strand" evidence="30">
    <location>
        <begin position="414"/>
        <end position="416"/>
    </location>
</feature>
<feature type="strand" evidence="30">
    <location>
        <begin position="418"/>
        <end position="420"/>
    </location>
</feature>
<feature type="strand" evidence="30">
    <location>
        <begin position="423"/>
        <end position="427"/>
    </location>
</feature>
<feature type="strand" evidence="30">
    <location>
        <begin position="429"/>
        <end position="439"/>
    </location>
</feature>
<feature type="strand" evidence="30">
    <location>
        <begin position="442"/>
        <end position="458"/>
    </location>
</feature>
<feature type="turn" evidence="30">
    <location>
        <begin position="459"/>
        <end position="462"/>
    </location>
</feature>
<feature type="strand" evidence="30">
    <location>
        <begin position="463"/>
        <end position="468"/>
    </location>
</feature>
<feature type="turn" evidence="30">
    <location>
        <begin position="469"/>
        <end position="472"/>
    </location>
</feature>
<feature type="strand" evidence="30">
    <location>
        <begin position="473"/>
        <end position="478"/>
    </location>
</feature>
<feature type="helix" evidence="30">
    <location>
        <begin position="479"/>
        <end position="481"/>
    </location>
</feature>
<feature type="helix" evidence="30">
    <location>
        <begin position="485"/>
        <end position="487"/>
    </location>
</feature>
<feature type="strand" evidence="30">
    <location>
        <begin position="489"/>
        <end position="492"/>
    </location>
</feature>
<feature type="strand" evidence="30">
    <location>
        <begin position="501"/>
        <end position="505"/>
    </location>
</feature>
<feature type="turn" evidence="30">
    <location>
        <begin position="506"/>
        <end position="509"/>
    </location>
</feature>
<feature type="strand" evidence="30">
    <location>
        <begin position="510"/>
        <end position="515"/>
    </location>
</feature>
<feature type="turn" evidence="30">
    <location>
        <begin position="516"/>
        <end position="519"/>
    </location>
</feature>
<feature type="strand" evidence="30">
    <location>
        <begin position="520"/>
        <end position="525"/>
    </location>
</feature>
<feature type="strand" evidence="30">
    <location>
        <begin position="530"/>
        <end position="535"/>
    </location>
</feature>
<feature type="strand" evidence="30">
    <location>
        <begin position="540"/>
        <end position="548"/>
    </location>
</feature>
<feature type="turn" evidence="30">
    <location>
        <begin position="549"/>
        <end position="552"/>
    </location>
</feature>
<feature type="strand" evidence="30">
    <location>
        <begin position="553"/>
        <end position="558"/>
    </location>
</feature>
<feature type="strand" evidence="30">
    <location>
        <begin position="560"/>
        <end position="562"/>
    </location>
</feature>
<feature type="strand" evidence="30">
    <location>
        <begin position="564"/>
        <end position="569"/>
    </location>
</feature>
<feature type="strand" evidence="30">
    <location>
        <begin position="576"/>
        <end position="579"/>
    </location>
</feature>
<feature type="strand" evidence="30">
    <location>
        <begin position="586"/>
        <end position="592"/>
    </location>
</feature>
<feature type="turn" evidence="30">
    <location>
        <begin position="593"/>
        <end position="596"/>
    </location>
</feature>
<feature type="strand" evidence="30">
    <location>
        <begin position="597"/>
        <end position="602"/>
    </location>
</feature>
<feature type="turn" evidence="30">
    <location>
        <begin position="603"/>
        <end position="606"/>
    </location>
</feature>
<feature type="strand" evidence="30">
    <location>
        <begin position="607"/>
        <end position="612"/>
    </location>
</feature>
<feature type="strand" evidence="30">
    <location>
        <begin position="619"/>
        <end position="622"/>
    </location>
</feature>
<feature type="turn" evidence="30">
    <location>
        <begin position="625"/>
        <end position="627"/>
    </location>
</feature>
<feature type="strand" evidence="30">
    <location>
        <begin position="629"/>
        <end position="637"/>
    </location>
</feature>
<feature type="strand" evidence="30">
    <location>
        <begin position="640"/>
        <end position="645"/>
    </location>
</feature>
<feature type="turn" evidence="30">
    <location>
        <begin position="646"/>
        <end position="649"/>
    </location>
</feature>
<feature type="strand" evidence="30">
    <location>
        <begin position="650"/>
        <end position="655"/>
    </location>
</feature>
<feature type="turn" evidence="30">
    <location>
        <begin position="656"/>
        <end position="658"/>
    </location>
</feature>
<feature type="strand" evidence="30">
    <location>
        <begin position="663"/>
        <end position="666"/>
    </location>
</feature>
<feature type="strand" evidence="30">
    <location>
        <begin position="675"/>
        <end position="678"/>
    </location>
</feature>
<feature type="helix" evidence="30">
    <location>
        <begin position="680"/>
        <end position="682"/>
    </location>
</feature>
<feature type="turn" evidence="30">
    <location>
        <begin position="689"/>
        <end position="691"/>
    </location>
</feature>
<feature type="strand" evidence="30">
    <location>
        <begin position="692"/>
        <end position="695"/>
    </location>
</feature>
<feature type="helix" evidence="30">
    <location>
        <begin position="696"/>
        <end position="699"/>
    </location>
</feature>
<feature type="strand" evidence="30">
    <location>
        <begin position="701"/>
        <end position="706"/>
    </location>
</feature>
<feature type="strand" evidence="30">
    <location>
        <begin position="710"/>
        <end position="714"/>
    </location>
</feature>
<feature type="strand" evidence="30">
    <location>
        <begin position="716"/>
        <end position="720"/>
    </location>
</feature>
<feature type="strand" evidence="30">
    <location>
        <begin position="731"/>
        <end position="735"/>
    </location>
</feature>
<proteinExistence type="evidence at protein level"/>
<sequence>MGLPEPGPLRLLALLLLLLLLLLLQLQHLAAAAADPLLGGQGPAKDCEKDQFQCRNERCIPSVWRCDEDDDCLDHSDEDDCPKKTCADSDFTCDNGHCIHERWKCDGEEECPDGSDESEATCTKQVCPAEKLSCGPTSHKCVPASWRCDGEKDCEGGADEAGCATLCAPHEFQCGNRSCLAAVFVCDGDDDCGDGSDERGCADPACGPREFRCGGDGGGACIPERWVCDRQFDCEDRSDEAAELCGRPGPGATSAPAACATASQFACRSGECVHLGWRCDGDRDCKDKSDEADCPLGTCRGDEFQCGDGTCVLAIKHCNQEQDCPDGSDEAGCLQGLNECLHNNGGCSHICTDLKIGFECTCPAGFQLLDQKTCGDIDECKDPDACSQICVNYKGYFKCECYPGYEMDLLTKNCKAAAGKSPSLIFTNRHEVRRIDLVKRNYSRLIPMLKNVVALDVEVATNRIYWCDLSYRKIYSAYMDKASDPKEQEVLIDEQLHSPEGLAVDWVHKHIYWTDSGNKTISVATVDGGRRRTLFSRNLSEPRAIAVDPLRGFMYWSDWGDQAKIEKSGLNGVDRQTLVSDNIEWPNGITLDLLSQRLYWVDSKLHQLSSIDFSGGNRKTLISSTDFLSHPFGIAVFEDKVFWTDLENEAIFSANRLNGLEISILAENLNNPHDIVIFHELKQPRAPDACELSVQPNGGCEYLCLPAPQISSHSPKYTCACPDTMWLGPDMKRCYRAPQSTSTTTLASTMTRTVPATTRAPGTTVHRSTYQNHSTETPSLTAAVPSSVSVPRAPSISPSTLSPATSNHSQHYANEDSKMGSTVTAAVIGIIVPIVVIALLCMSGYLIWRNWKRKNTKSMNFDNPVYRKTTEEEDEDELHIGRTAQIGHVYPAAISSFDRPLWAEPCLGETREPEDPAPALKELFVLPGEPRSQLHQLPKNPLSELPVVKSKRVALSLEDDGLP</sequence>
<reference key="1">
    <citation type="journal article" date="1996" name="J. Biol. Chem.">
        <title>Human apolipoprotein E receptor 2. A novel lipoprotein receptor of the low density lipoprotein receptor family predominantly expressed in brain.</title>
        <authorList>
            <person name="Kim D.-H."/>
            <person name="Iijima H."/>
            <person name="Goto K."/>
            <person name="Sakai J."/>
            <person name="Ishii H."/>
            <person name="Kim H.-J."/>
            <person name="Suzuki H."/>
            <person name="Kondo H."/>
            <person name="Saeki S."/>
            <person name="Yamamoto T."/>
        </authorList>
    </citation>
    <scope>NUCLEOTIDE SEQUENCE [MRNA] (ISOFORM 1)</scope>
    <scope>VARIANTS ARG-25 AND GLU-46</scope>
    <source>
        <tissue>Placenta</tissue>
    </source>
</reference>
<reference key="2">
    <citation type="journal article" date="1997" name="J. Biol. Chem.">
        <title>Exon/intron organization, chromosome localization, alternative splicing, and transcription units of the human apolipoprotein E receptor 2 gene.</title>
        <authorList>
            <person name="Kim D.-H."/>
            <person name="Magoori K."/>
            <person name="Inoue T.R."/>
            <person name="Mao C.C."/>
            <person name="Kim H.-J."/>
            <person name="Suzuki H."/>
            <person name="Fujita T."/>
            <person name="Endo Y."/>
            <person name="Saeki S."/>
            <person name="Yamamoto T.T."/>
        </authorList>
    </citation>
    <scope>NUCLEOTIDE SEQUENCE [GENOMIC DNA] (ISOFORMS 1 AND 4)</scope>
    <scope>VARIANTS ARG-25 AND GLU-46</scope>
    <source>
        <tissue>Peripheral blood</tissue>
    </source>
</reference>
<reference key="3">
    <citation type="journal article" date="2001" name="J. Biol. Chem.">
        <title>Identification of a novel exon in apolipoprotein E receptor 2 leading to alternatively spliced mRNAs found in cells of the vascular wall but not in neuronal tissue.</title>
        <authorList>
            <person name="Korschineck I."/>
            <person name="Ziegler S."/>
            <person name="Breuss J."/>
            <person name="Lang I."/>
            <person name="Lorenz M."/>
            <person name="Kaun C."/>
            <person name="Ambros P.F."/>
            <person name="Binder B.R."/>
        </authorList>
    </citation>
    <scope>NUCLEOTIDE SEQUENCE [MRNA] (ISOFORM 2)</scope>
    <scope>VARIANTS ARG-25 AND GLU-46</scope>
    <source>
        <tissue>Umbilical vein</tissue>
    </source>
</reference>
<reference key="4">
    <citation type="journal article" date="2006" name="Nature">
        <title>The DNA sequence and biological annotation of human chromosome 1.</title>
        <authorList>
            <person name="Gregory S.G."/>
            <person name="Barlow K.F."/>
            <person name="McLay K.E."/>
            <person name="Kaul R."/>
            <person name="Swarbreck D."/>
            <person name="Dunham A."/>
            <person name="Scott C.E."/>
            <person name="Howe K.L."/>
            <person name="Woodfine K."/>
            <person name="Spencer C.C.A."/>
            <person name="Jones M.C."/>
            <person name="Gillson C."/>
            <person name="Searle S."/>
            <person name="Zhou Y."/>
            <person name="Kokocinski F."/>
            <person name="McDonald L."/>
            <person name="Evans R."/>
            <person name="Phillips K."/>
            <person name="Atkinson A."/>
            <person name="Cooper R."/>
            <person name="Jones C."/>
            <person name="Hall R.E."/>
            <person name="Andrews T.D."/>
            <person name="Lloyd C."/>
            <person name="Ainscough R."/>
            <person name="Almeida J.P."/>
            <person name="Ambrose K.D."/>
            <person name="Anderson F."/>
            <person name="Andrew R.W."/>
            <person name="Ashwell R.I.S."/>
            <person name="Aubin K."/>
            <person name="Babbage A.K."/>
            <person name="Bagguley C.L."/>
            <person name="Bailey J."/>
            <person name="Beasley H."/>
            <person name="Bethel G."/>
            <person name="Bird C.P."/>
            <person name="Bray-Allen S."/>
            <person name="Brown J.Y."/>
            <person name="Brown A.J."/>
            <person name="Buckley D."/>
            <person name="Burton J."/>
            <person name="Bye J."/>
            <person name="Carder C."/>
            <person name="Chapman J.C."/>
            <person name="Clark S.Y."/>
            <person name="Clarke G."/>
            <person name="Clee C."/>
            <person name="Cobley V."/>
            <person name="Collier R.E."/>
            <person name="Corby N."/>
            <person name="Coville G.J."/>
            <person name="Davies J."/>
            <person name="Deadman R."/>
            <person name="Dunn M."/>
            <person name="Earthrowl M."/>
            <person name="Ellington A.G."/>
            <person name="Errington H."/>
            <person name="Frankish A."/>
            <person name="Frankland J."/>
            <person name="French L."/>
            <person name="Garner P."/>
            <person name="Garnett J."/>
            <person name="Gay L."/>
            <person name="Ghori M.R.J."/>
            <person name="Gibson R."/>
            <person name="Gilby L.M."/>
            <person name="Gillett W."/>
            <person name="Glithero R.J."/>
            <person name="Grafham D.V."/>
            <person name="Griffiths C."/>
            <person name="Griffiths-Jones S."/>
            <person name="Grocock R."/>
            <person name="Hammond S."/>
            <person name="Harrison E.S.I."/>
            <person name="Hart E."/>
            <person name="Haugen E."/>
            <person name="Heath P.D."/>
            <person name="Holmes S."/>
            <person name="Holt K."/>
            <person name="Howden P.J."/>
            <person name="Hunt A.R."/>
            <person name="Hunt S.E."/>
            <person name="Hunter G."/>
            <person name="Isherwood J."/>
            <person name="James R."/>
            <person name="Johnson C."/>
            <person name="Johnson D."/>
            <person name="Joy A."/>
            <person name="Kay M."/>
            <person name="Kershaw J.K."/>
            <person name="Kibukawa M."/>
            <person name="Kimberley A.M."/>
            <person name="King A."/>
            <person name="Knights A.J."/>
            <person name="Lad H."/>
            <person name="Laird G."/>
            <person name="Lawlor S."/>
            <person name="Leongamornlert D.A."/>
            <person name="Lloyd D.M."/>
            <person name="Loveland J."/>
            <person name="Lovell J."/>
            <person name="Lush M.J."/>
            <person name="Lyne R."/>
            <person name="Martin S."/>
            <person name="Mashreghi-Mohammadi M."/>
            <person name="Matthews L."/>
            <person name="Matthews N.S.W."/>
            <person name="McLaren S."/>
            <person name="Milne S."/>
            <person name="Mistry S."/>
            <person name="Moore M.J.F."/>
            <person name="Nickerson T."/>
            <person name="O'Dell C.N."/>
            <person name="Oliver K."/>
            <person name="Palmeiri A."/>
            <person name="Palmer S.A."/>
            <person name="Parker A."/>
            <person name="Patel D."/>
            <person name="Pearce A.V."/>
            <person name="Peck A.I."/>
            <person name="Pelan S."/>
            <person name="Phelps K."/>
            <person name="Phillimore B.J."/>
            <person name="Plumb R."/>
            <person name="Rajan J."/>
            <person name="Raymond C."/>
            <person name="Rouse G."/>
            <person name="Saenphimmachak C."/>
            <person name="Sehra H.K."/>
            <person name="Sheridan E."/>
            <person name="Shownkeen R."/>
            <person name="Sims S."/>
            <person name="Skuce C.D."/>
            <person name="Smith M."/>
            <person name="Steward C."/>
            <person name="Subramanian S."/>
            <person name="Sycamore N."/>
            <person name="Tracey A."/>
            <person name="Tromans A."/>
            <person name="Van Helmond Z."/>
            <person name="Wall M."/>
            <person name="Wallis J.M."/>
            <person name="White S."/>
            <person name="Whitehead S.L."/>
            <person name="Wilkinson J.E."/>
            <person name="Willey D.L."/>
            <person name="Williams H."/>
            <person name="Wilming L."/>
            <person name="Wray P.W."/>
            <person name="Wu Z."/>
            <person name="Coulson A."/>
            <person name="Vaudin M."/>
            <person name="Sulston J.E."/>
            <person name="Durbin R.M."/>
            <person name="Hubbard T."/>
            <person name="Wooster R."/>
            <person name="Dunham I."/>
            <person name="Carter N.P."/>
            <person name="McVean G."/>
            <person name="Ross M.T."/>
            <person name="Harrow J."/>
            <person name="Olson M.V."/>
            <person name="Beck S."/>
            <person name="Rogers J."/>
            <person name="Bentley D.R."/>
        </authorList>
    </citation>
    <scope>NUCLEOTIDE SEQUENCE [LARGE SCALE GENOMIC DNA]</scope>
</reference>
<reference key="5">
    <citation type="journal article" date="2004" name="Genome Res.">
        <title>The status, quality, and expansion of the NIH full-length cDNA project: the Mammalian Gene Collection (MGC).</title>
        <authorList>
            <consortium name="The MGC Project Team"/>
        </authorList>
    </citation>
    <scope>NUCLEOTIDE SEQUENCE [LARGE SCALE MRNA] (ISOFORM 3)</scope>
    <scope>NUCLEOTIDE SEQUENCE [LARGE SCALE MRNA] OF 720-963 (ISOFORM 1)</scope>
    <scope>VARIANTS ARG-25 AND GLU-46</scope>
    <source>
        <tissue>Eye</tissue>
        <tissue>Lung</tissue>
    </source>
</reference>
<reference key="6">
    <citation type="journal article" date="1999" name="Neuroscience">
        <title>Expression and alternate splicing of apolipoprotein E receptor 2 in brain.</title>
        <authorList>
            <person name="Clatworthy A.E."/>
            <person name="Stockinger W."/>
            <person name="Christie R.H."/>
            <person name="Schneider W.J."/>
            <person name="Nimpf J."/>
            <person name="Hyman B.T."/>
            <person name="Rebeck G.W."/>
        </authorList>
    </citation>
    <scope>ALTERNATIVE SPLICING</scope>
    <scope>TISSUE SPECIFICITY</scope>
</reference>
<reference key="7">
    <citation type="journal article" date="2003" name="FEBS Lett.">
        <title>Apolipoprotein E (apoE) isoforms differentially induce nitric oxide production in endothelial cells.</title>
        <authorList>
            <person name="Sacre S.M."/>
            <person name="Stannard A.K."/>
            <person name="Owen J.S."/>
        </authorList>
    </citation>
    <scope>PHOSPHORYLATION AT TYROSINE RESIDUES</scope>
</reference>
<reference key="8">
    <citation type="journal article" date="1999" name="J. Lipid Res.">
        <title>Identification and characterization of LRP8 (apoER2) in human blood platelets.</title>
        <authorList>
            <person name="Riddell D.R."/>
            <person name="Vinogradov D.V."/>
            <person name="Stannard A.K."/>
            <person name="Chadwick N."/>
            <person name="Owen J.S."/>
        </authorList>
    </citation>
    <scope>CHARACTERIZATION</scope>
    <scope>TISSUE SPECIFICITY</scope>
</reference>
<reference key="9">
    <citation type="journal article" date="2003" name="Biochemistry">
        <title>Differential binding of ligands to the apolipoprotein E receptor 2.</title>
        <authorList>
            <person name="Andersen O.M."/>
            <person name="Benhayon D."/>
            <person name="Curran T."/>
            <person name="Willnow T.E."/>
        </authorList>
    </citation>
    <scope>FUNCTION AS A RECEPTOR FOR REELIN</scope>
</reference>
<reference key="10">
    <citation type="journal article" date="2003" name="Biochemistry">
        <title>Domains of apoE required for binding to apoE receptor 2 and to phospholipids: implications for the functions of apoE in the brain.</title>
        <authorList>
            <person name="Li X."/>
            <person name="Kypreos K."/>
            <person name="Zanni E.E."/>
            <person name="Zannis V."/>
        </authorList>
    </citation>
    <scope>FUNCTION AS A RECEPTOR FOR APOE</scope>
</reference>
<reference key="11">
    <citation type="journal article" date="2003" name="J. Biol. Chem.">
        <title>Dimers of beta 2-glycoprotein I increase platelet deposition to collagen via interaction with phospholipids and the apolipoprotein E receptor 2'.</title>
        <authorList>
            <person name="Lutters B.C."/>
            <person name="Derksen R.H."/>
            <person name="Tekelenburg W.L."/>
            <person name="Lenting P.J."/>
            <person name="Arnout J."/>
            <person name="de Groot P.G."/>
        </authorList>
    </citation>
    <scope>FUNCTION AS A RECEPTOR FOR BETA 2-GLYCOPROTEIN I</scope>
</reference>
<reference key="12">
    <citation type="journal article" date="2008" name="J. Biol. Chem.">
        <title>The proprotein convertase PCSK9 induces the degradation of low density lipoprotein receptor (LDLR) and its closest family members VLDLR and ApoER2.</title>
        <authorList>
            <person name="Poirier S."/>
            <person name="Mayer G."/>
            <person name="Benjannet S."/>
            <person name="Bergeron E."/>
            <person name="Marcinkiewicz J."/>
            <person name="Nassoury N."/>
            <person name="Mayer H."/>
            <person name="Nimpf J."/>
            <person name="Prat A."/>
            <person name="Seidah N.G."/>
        </authorList>
    </citation>
    <scope>INTERACTION WITH PCSK9</scope>
</reference>
<reference key="13">
    <citation type="journal article" date="2010" name="J. Biol. Chem.">
        <title>The E3 ubiquitin ligase IDOL induces the degradation of the low density lipoprotein receptor family members VLDLR and ApoER2.</title>
        <authorList>
            <person name="Hong C."/>
            <person name="Duit S."/>
            <person name="Jalonen P."/>
            <person name="Out R."/>
            <person name="Scheer L."/>
            <person name="Sorrentino V."/>
            <person name="Boyadjian R."/>
            <person name="Rodenburg K.W."/>
            <person name="Foley E."/>
            <person name="Korhonen L."/>
            <person name="Lindholm D."/>
            <person name="Nimpf J."/>
            <person name="van Berkel T.J."/>
            <person name="Tontonoz P."/>
            <person name="Zelcer N."/>
        </authorList>
    </citation>
    <scope>UBIQUITINATION</scope>
</reference>
<reference key="14">
    <citation type="journal article" date="2014" name="J. Biol. Chem.">
        <title>Clusterin is a ligand for apolipoprotein E receptor 2 (ApoER2) and very low density lipoprotein receptor (VLDLR) and signals via the Reelin-signaling pathway.</title>
        <authorList>
            <person name="Leeb C."/>
            <person name="Eresheim C."/>
            <person name="Nimpf J."/>
        </authorList>
    </citation>
    <scope>INTERACTION WITH CLU</scope>
</reference>
<reference key="15">
    <citation type="journal article" date="2019" name="Front. Mol. Neurosci.">
        <title>Differential Action of Reelin on Oligomerization of ApoER2 and VLDL Receptor in HEK293 Cells Assessed by Time-Resolved Anisotropy and Fluorescence Lifetime Imaging Microscopy.</title>
        <authorList>
            <person name="Dlugosz P."/>
            <person name="Tresky R."/>
            <person name="Nimpf J."/>
        </authorList>
    </citation>
    <scope>FUNCTION</scope>
    <scope>SUBUNIT</scope>
    <scope>SUBCELLULAR LOCATION</scope>
    <scope>INTERACTION WITH VLDLR</scope>
</reference>
<reference key="16">
    <citation type="journal article" date="2022" name="Nature">
        <title>VLDLR and ApoER2 are receptors for multiple alphaviruses.</title>
        <authorList>
            <person name="Clark L.E."/>
            <person name="Clark S.A."/>
            <person name="Lin C."/>
            <person name="Liu J."/>
            <person name="Coscia A."/>
            <person name="Nabel K.G."/>
            <person name="Yang P."/>
            <person name="Neel D.V."/>
            <person name="Lee H."/>
            <person name="Brusic V."/>
            <person name="Stryapunina I."/>
            <person name="Plante K.S."/>
            <person name="Ahmed A.A."/>
            <person name="Catteruccia F."/>
            <person name="Young-Pearse T.L."/>
            <person name="Chiu I.M."/>
            <person name="Llopis P.M."/>
            <person name="Weaver S.C."/>
            <person name="Abraham J."/>
        </authorList>
    </citation>
    <scope>FUNCTION (MICROBIAL INFECTION)</scope>
    <scope>INTERACTION WITH SEMLIKI FOREST VIRUS E2-E1 HETERODIMER (MICROBIAL INFECTION)</scope>
    <scope>SUBCELLULAR LOCATION</scope>
</reference>
<reference key="17">
    <citation type="journal article" date="2024" name="Nat. Commun.">
        <title>Structural basis for VLDLR recognition by eastern equine encephalitis virus.</title>
        <authorList>
            <person name="Yang P."/>
            <person name="Li W."/>
            <person name="Fan X."/>
            <person name="Pan J."/>
            <person name="Mann C.J."/>
            <person name="Varnum H."/>
            <person name="Clark L.E."/>
            <person name="Clark S.A."/>
            <person name="Coscia A."/>
            <person name="Basu H."/>
            <person name="Smith K.N."/>
            <person name="Brusic V."/>
            <person name="Abraham J."/>
        </authorList>
    </citation>
    <scope>INTERACTION WITH EASTERN EQUINE ENCEPHALITIS VIRUS SPIKE GLYCOPROTEIN E2 (MICROBIAL INFECTION)</scope>
</reference>
<reference evidence="29" key="18">
    <citation type="journal article" date="2010" name="Structure">
        <title>Structural basis for specific recognition of reelin by its receptors.</title>
        <authorList>
            <person name="Yasui N."/>
            <person name="Nogi T."/>
            <person name="Takagi J."/>
        </authorList>
    </citation>
    <scope>X-RAY CRYSTALLOGRAPHY (2.60 ANGSTROMS) OF 42-83 IN COMPLEX WITH REELIN/RELN AND CALCIUM</scope>
    <scope>FUNCTION</scope>
    <scope>DISULFIDE BOND</scope>
</reference>
<reference key="19">
    <citation type="journal article" date="2002" name="Neurosci. Lett.">
        <title>Low-density lipoprotein receptor-related protein 8 (apolipoprotein E receptor 2) gene polymorphisms in Alzheimer's disease.</title>
        <authorList>
            <person name="Ma S.L."/>
            <person name="Ng H.K."/>
            <person name="Baum L."/>
            <person name="Pang J.C."/>
            <person name="Chiu H.F."/>
            <person name="Woo J."/>
            <person name="Tang N.L."/>
            <person name="Lam L.C."/>
        </authorList>
    </citation>
    <scope>VARIANTS GLU-46 AND GLN-952</scope>
</reference>
<reference key="20">
    <citation type="journal article" date="2007" name="Am. J. Hum. Genet.">
        <title>An LRP8 variant is associated with familial and premature coronary artery disease and myocardial infarction.</title>
        <authorList>
            <person name="Shen G.-Q."/>
            <person name="Li L."/>
            <person name="Girelli D."/>
            <person name="Seidelmann S.B."/>
            <person name="Rao S."/>
            <person name="Fan C."/>
            <person name="Park J.E."/>
            <person name="Xi Q."/>
            <person name="Li J."/>
            <person name="Hu Y."/>
            <person name="Olivieri O."/>
            <person name="Marchant K."/>
            <person name="Barnard J."/>
            <person name="Corrocher R."/>
            <person name="Elston R."/>
            <person name="Cassano J."/>
            <person name="Henderson S."/>
            <person name="Hazen S.L."/>
            <person name="Plow E.F."/>
            <person name="Topol E.J."/>
            <person name="Wang Q.K."/>
        </authorList>
    </citation>
    <scope>VARIANT GLN-952</scope>
    <scope>CHARACTERIZATION OF VARIANT GLN-952</scope>
    <scope>INVOLVEMENT IN MCI1</scope>
</reference>
<protein>
    <recommendedName>
        <fullName>Low-density lipoprotein receptor-related protein 8</fullName>
        <shortName>LRP-8</shortName>
    </recommendedName>
    <alternativeName>
        <fullName>Apolipoprotein E receptor 2</fullName>
    </alternativeName>
</protein>
<keyword id="KW-0002">3D-structure</keyword>
<keyword id="KW-0025">Alternative splicing</keyword>
<keyword id="KW-0106">Calcium</keyword>
<keyword id="KW-1003">Cell membrane</keyword>
<keyword id="KW-1015">Disulfide bond</keyword>
<keyword id="KW-0245">EGF-like domain</keyword>
<keyword id="KW-0254">Endocytosis</keyword>
<keyword id="KW-0325">Glycoprotein</keyword>
<keyword id="KW-0945">Host-virus interaction</keyword>
<keyword id="KW-0472">Membrane</keyword>
<keyword id="KW-0479">Metal-binding</keyword>
<keyword id="KW-0597">Phosphoprotein</keyword>
<keyword id="KW-1267">Proteomics identification</keyword>
<keyword id="KW-0675">Receptor</keyword>
<keyword id="KW-1185">Reference proteome</keyword>
<keyword id="KW-0677">Repeat</keyword>
<keyword id="KW-0964">Secreted</keyword>
<keyword id="KW-0732">Signal</keyword>
<keyword id="KW-0812">Transmembrane</keyword>
<keyword id="KW-1133">Transmembrane helix</keyword>
<keyword id="KW-0832">Ubl conjugation</keyword>
<dbReference type="EMBL" id="D50678">
    <property type="protein sequence ID" value="BAA09328.1"/>
    <property type="molecule type" value="mRNA"/>
</dbReference>
<dbReference type="EMBL" id="D86407">
    <property type="protein sequence ID" value="BAA21824.1"/>
    <property type="molecule type" value="Genomic_DNA"/>
</dbReference>
<dbReference type="EMBL" id="D86407">
    <property type="protein sequence ID" value="BAA21825.1"/>
    <property type="molecule type" value="Genomic_DNA"/>
</dbReference>
<dbReference type="EMBL" id="Z75190">
    <property type="protein sequence ID" value="CAA99509.1"/>
    <property type="status" value="ALT_FRAME"/>
    <property type="molecule type" value="mRNA"/>
</dbReference>
<dbReference type="EMBL" id="AL355483">
    <property type="status" value="NOT_ANNOTATED_CDS"/>
    <property type="molecule type" value="Genomic_DNA"/>
</dbReference>
<dbReference type="EMBL" id="AL606760">
    <property type="status" value="NOT_ANNOTATED_CDS"/>
    <property type="molecule type" value="Genomic_DNA"/>
</dbReference>
<dbReference type="EMBL" id="BC006443">
    <property type="protein sequence ID" value="AAH06443.1"/>
    <property type="molecule type" value="mRNA"/>
</dbReference>
<dbReference type="EMBL" id="BC051836">
    <property type="protein sequence ID" value="AAH51836.2"/>
    <property type="molecule type" value="mRNA"/>
</dbReference>
<dbReference type="CCDS" id="CCDS30720.1">
    <molecule id="Q14114-3"/>
</dbReference>
<dbReference type="CCDS" id="CCDS578.1">
    <molecule id="Q14114-1"/>
</dbReference>
<dbReference type="CCDS" id="CCDS579.1">
    <molecule id="Q14114-2"/>
</dbReference>
<dbReference type="CCDS" id="CCDS580.1">
    <molecule id="Q14114-4"/>
</dbReference>
<dbReference type="RefSeq" id="NP_001018064.1">
    <molecule id="Q14114-3"/>
    <property type="nucleotide sequence ID" value="NM_001018054.3"/>
</dbReference>
<dbReference type="RefSeq" id="NP_004622.2">
    <molecule id="Q14114-1"/>
    <property type="nucleotide sequence ID" value="NM_004631.5"/>
</dbReference>
<dbReference type="RefSeq" id="NP_059992.3">
    <molecule id="Q14114-2"/>
    <property type="nucleotide sequence ID" value="NM_017522.4"/>
</dbReference>
<dbReference type="RefSeq" id="NP_150643.2">
    <molecule id="Q14114-4"/>
    <property type="nucleotide sequence ID" value="NM_033300.4"/>
</dbReference>
<dbReference type="PDB" id="3A7Q">
    <property type="method" value="X-ray"/>
    <property type="resolution" value="2.60 A"/>
    <property type="chains" value="B=42-83"/>
</dbReference>
<dbReference type="PDB" id="5B4X">
    <property type="method" value="X-ray"/>
    <property type="resolution" value="3.20 A"/>
    <property type="chains" value="B/D=42-736"/>
</dbReference>
<dbReference type="PDB" id="5B4Y">
    <property type="method" value="X-ray"/>
    <property type="resolution" value="1.90 A"/>
    <property type="chains" value="B=42-124"/>
</dbReference>
<dbReference type="PDB" id="7UCX">
    <property type="method" value="X-ray"/>
    <property type="resolution" value="1.72 A"/>
    <property type="chains" value="B=47-65"/>
</dbReference>
<dbReference type="PDBsum" id="3A7Q"/>
<dbReference type="PDBsum" id="5B4X"/>
<dbReference type="PDBsum" id="5B4Y"/>
<dbReference type="PDBsum" id="7UCX"/>
<dbReference type="SMR" id="Q14114"/>
<dbReference type="BioGRID" id="113579">
    <property type="interactions" value="92"/>
</dbReference>
<dbReference type="DIP" id="DIP-48670N"/>
<dbReference type="ELM" id="Q14114"/>
<dbReference type="FunCoup" id="Q14114">
    <property type="interactions" value="683"/>
</dbReference>
<dbReference type="IntAct" id="Q14114">
    <property type="interactions" value="36"/>
</dbReference>
<dbReference type="STRING" id="9606.ENSP00000303634"/>
<dbReference type="GlyCosmos" id="Q14114">
    <property type="glycosylation" value="6 sites, No reported glycans"/>
</dbReference>
<dbReference type="GlyGen" id="Q14114">
    <property type="glycosylation" value="13 sites, 5 N-linked glycans (4 sites), 2 O-linked glycans (6 sites)"/>
</dbReference>
<dbReference type="iPTMnet" id="Q14114"/>
<dbReference type="PhosphoSitePlus" id="Q14114"/>
<dbReference type="SwissPalm" id="Q14114"/>
<dbReference type="BioMuta" id="LRP8"/>
<dbReference type="DMDM" id="259016389"/>
<dbReference type="jPOST" id="Q14114"/>
<dbReference type="MassIVE" id="Q14114"/>
<dbReference type="PaxDb" id="9606-ENSP00000303634"/>
<dbReference type="PeptideAtlas" id="Q14114"/>
<dbReference type="ProteomicsDB" id="59819">
    <molecule id="Q14114-1"/>
</dbReference>
<dbReference type="ProteomicsDB" id="59820">
    <molecule id="Q14114-2"/>
</dbReference>
<dbReference type="ProteomicsDB" id="59821">
    <molecule id="Q14114-3"/>
</dbReference>
<dbReference type="ProteomicsDB" id="59822">
    <molecule id="Q14114-4"/>
</dbReference>
<dbReference type="Pumba" id="Q14114"/>
<dbReference type="Antibodypedia" id="33078">
    <property type="antibodies" value="417 antibodies from 33 providers"/>
</dbReference>
<dbReference type="DNASU" id="7804"/>
<dbReference type="Ensembl" id="ENST00000306052.12">
    <molecule id="Q14114-1"/>
    <property type="protein sequence ID" value="ENSP00000303634.6"/>
    <property type="gene ID" value="ENSG00000157193.18"/>
</dbReference>
<dbReference type="Ensembl" id="ENST00000347547.7">
    <molecule id="Q14114-4"/>
    <property type="protein sequence ID" value="ENSP00000334522.2"/>
    <property type="gene ID" value="ENSG00000157193.18"/>
</dbReference>
<dbReference type="Ensembl" id="ENST00000354412.7">
    <molecule id="Q14114-2"/>
    <property type="protein sequence ID" value="ENSP00000346391.3"/>
    <property type="gene ID" value="ENSG00000157193.18"/>
</dbReference>
<dbReference type="Ensembl" id="ENST00000371454.6">
    <molecule id="Q14114-3"/>
    <property type="protein sequence ID" value="ENSP00000360509.2"/>
    <property type="gene ID" value="ENSG00000157193.18"/>
</dbReference>
<dbReference type="GeneID" id="7804"/>
<dbReference type="KEGG" id="hsa:7804"/>
<dbReference type="MANE-Select" id="ENST00000306052.12">
    <property type="protein sequence ID" value="ENSP00000303634.6"/>
    <property type="RefSeq nucleotide sequence ID" value="NM_004631.5"/>
    <property type="RefSeq protein sequence ID" value="NP_004622.2"/>
</dbReference>
<dbReference type="UCSC" id="uc001cvi.4">
    <molecule id="Q14114-1"/>
    <property type="organism name" value="human"/>
</dbReference>
<dbReference type="AGR" id="HGNC:6700"/>
<dbReference type="CTD" id="7804"/>
<dbReference type="DisGeNET" id="7804"/>
<dbReference type="GeneCards" id="LRP8"/>
<dbReference type="HGNC" id="HGNC:6700">
    <property type="gene designation" value="LRP8"/>
</dbReference>
<dbReference type="HPA" id="ENSG00000157193">
    <property type="expression patterns" value="Tissue enhanced (testis, thyroid gland)"/>
</dbReference>
<dbReference type="MalaCards" id="LRP8"/>
<dbReference type="MIM" id="602600">
    <property type="type" value="gene"/>
</dbReference>
<dbReference type="MIM" id="608446">
    <property type="type" value="phenotype"/>
</dbReference>
<dbReference type="neXtProt" id="NX_Q14114"/>
<dbReference type="OpenTargets" id="ENSG00000157193"/>
<dbReference type="PharmGKB" id="PA30457"/>
<dbReference type="VEuPathDB" id="HostDB:ENSG00000157193"/>
<dbReference type="eggNOG" id="KOG1215">
    <property type="taxonomic scope" value="Eukaryota"/>
</dbReference>
<dbReference type="GeneTree" id="ENSGT00940000154819"/>
<dbReference type="HOGENOM" id="CLU_008163_4_0_1"/>
<dbReference type="InParanoid" id="Q14114"/>
<dbReference type="OMA" id="CESPTKF"/>
<dbReference type="OrthoDB" id="5958943at2759"/>
<dbReference type="PAN-GO" id="Q14114">
    <property type="GO annotations" value="3 GO annotations based on evolutionary models"/>
</dbReference>
<dbReference type="PhylomeDB" id="Q14114"/>
<dbReference type="TreeFam" id="TF351700"/>
<dbReference type="PathwayCommons" id="Q14114"/>
<dbReference type="Reactome" id="R-HSA-432142">
    <property type="pathway name" value="Platelet sensitization by LDL"/>
</dbReference>
<dbReference type="Reactome" id="R-HSA-975634">
    <property type="pathway name" value="Retinoid metabolism and transport"/>
</dbReference>
<dbReference type="SignaLink" id="Q14114"/>
<dbReference type="SIGNOR" id="Q14114"/>
<dbReference type="BioGRID-ORCS" id="7804">
    <property type="hits" value="35 hits in 1154 CRISPR screens"/>
</dbReference>
<dbReference type="EvolutionaryTrace" id="Q14114"/>
<dbReference type="GeneWiki" id="Low_density_lipoprotein_receptor-related_protein_8"/>
<dbReference type="GenomeRNAi" id="7804"/>
<dbReference type="Pharos" id="Q14114">
    <property type="development level" value="Tbio"/>
</dbReference>
<dbReference type="PRO" id="PR:Q14114"/>
<dbReference type="Proteomes" id="UP000005640">
    <property type="component" value="Chromosome 1"/>
</dbReference>
<dbReference type="RNAct" id="Q14114">
    <property type="molecule type" value="protein"/>
</dbReference>
<dbReference type="Bgee" id="ENSG00000157193">
    <property type="expression patterns" value="Expressed in ganglionic eminence and 179 other cell types or tissues"/>
</dbReference>
<dbReference type="ExpressionAtlas" id="Q14114">
    <property type="expression patterns" value="baseline and differential"/>
</dbReference>
<dbReference type="GO" id="GO:0030424">
    <property type="term" value="C:axon"/>
    <property type="evidence" value="ECO:0007669"/>
    <property type="project" value="Ensembl"/>
</dbReference>
<dbReference type="GO" id="GO:0005901">
    <property type="term" value="C:caveola"/>
    <property type="evidence" value="ECO:0000314"/>
    <property type="project" value="BHF-UCL"/>
</dbReference>
<dbReference type="GO" id="GO:0009986">
    <property type="term" value="C:cell surface"/>
    <property type="evidence" value="ECO:0007669"/>
    <property type="project" value="Ensembl"/>
</dbReference>
<dbReference type="GO" id="GO:0030425">
    <property type="term" value="C:dendrite"/>
    <property type="evidence" value="ECO:0007669"/>
    <property type="project" value="Ensembl"/>
</dbReference>
<dbReference type="GO" id="GO:0005615">
    <property type="term" value="C:extracellular space"/>
    <property type="evidence" value="ECO:0007669"/>
    <property type="project" value="Ensembl"/>
</dbReference>
<dbReference type="GO" id="GO:0098978">
    <property type="term" value="C:glutamatergic synapse"/>
    <property type="evidence" value="ECO:0007669"/>
    <property type="project" value="Ensembl"/>
</dbReference>
<dbReference type="GO" id="GO:0016020">
    <property type="term" value="C:membrane"/>
    <property type="evidence" value="ECO:0007005"/>
    <property type="project" value="UniProtKB"/>
</dbReference>
<dbReference type="GO" id="GO:0005875">
    <property type="term" value="C:microtubule associated complex"/>
    <property type="evidence" value="ECO:0007669"/>
    <property type="project" value="Ensembl"/>
</dbReference>
<dbReference type="GO" id="GO:0043025">
    <property type="term" value="C:neuronal cell body"/>
    <property type="evidence" value="ECO:0007669"/>
    <property type="project" value="Ensembl"/>
</dbReference>
<dbReference type="GO" id="GO:0005886">
    <property type="term" value="C:plasma membrane"/>
    <property type="evidence" value="ECO:0000314"/>
    <property type="project" value="UniProt"/>
</dbReference>
<dbReference type="GO" id="GO:0098839">
    <property type="term" value="C:postsynaptic density membrane"/>
    <property type="evidence" value="ECO:0007669"/>
    <property type="project" value="Ensembl"/>
</dbReference>
<dbReference type="GO" id="GO:0043235">
    <property type="term" value="C:receptor complex"/>
    <property type="evidence" value="ECO:0000314"/>
    <property type="project" value="MGI"/>
</dbReference>
<dbReference type="GO" id="GO:0098685">
    <property type="term" value="C:Schaffer collateral - CA1 synapse"/>
    <property type="evidence" value="ECO:0007669"/>
    <property type="project" value="Ensembl"/>
</dbReference>
<dbReference type="GO" id="GO:0001540">
    <property type="term" value="F:amyloid-beta binding"/>
    <property type="evidence" value="ECO:0007669"/>
    <property type="project" value="Ensembl"/>
</dbReference>
<dbReference type="GO" id="GO:0034185">
    <property type="term" value="F:apolipoprotein binding"/>
    <property type="evidence" value="ECO:0000305"/>
    <property type="project" value="BHF-UCL"/>
</dbReference>
<dbReference type="GO" id="GO:0005509">
    <property type="term" value="F:calcium ion binding"/>
    <property type="evidence" value="ECO:0007669"/>
    <property type="project" value="InterPro"/>
</dbReference>
<dbReference type="GO" id="GO:0048306">
    <property type="term" value="F:calcium-dependent protein binding"/>
    <property type="evidence" value="ECO:0007669"/>
    <property type="project" value="Ensembl"/>
</dbReference>
<dbReference type="GO" id="GO:0038024">
    <property type="term" value="F:cargo receptor activity"/>
    <property type="evidence" value="ECO:0000303"/>
    <property type="project" value="ARUK-UCL"/>
</dbReference>
<dbReference type="GO" id="GO:0008035">
    <property type="term" value="F:high-density lipoprotein particle binding"/>
    <property type="evidence" value="ECO:0007669"/>
    <property type="project" value="Ensembl"/>
</dbReference>
<dbReference type="GO" id="GO:0019894">
    <property type="term" value="F:kinesin binding"/>
    <property type="evidence" value="ECO:0007669"/>
    <property type="project" value="Ensembl"/>
</dbReference>
<dbReference type="GO" id="GO:0005041">
    <property type="term" value="F:low-density lipoprotein particle receptor activity"/>
    <property type="evidence" value="ECO:0000304"/>
    <property type="project" value="ARUK-UCL"/>
</dbReference>
<dbReference type="GO" id="GO:0038025">
    <property type="term" value="F:reelin receptor activity"/>
    <property type="evidence" value="ECO:0000250"/>
    <property type="project" value="BHF-UCL"/>
</dbReference>
<dbReference type="GO" id="GO:0004888">
    <property type="term" value="F:transmembrane signaling receptor activity"/>
    <property type="evidence" value="ECO:0000304"/>
    <property type="project" value="ProtInc"/>
</dbReference>
<dbReference type="GO" id="GO:0030229">
    <property type="term" value="F:very-low-density lipoprotein particle receptor activity"/>
    <property type="evidence" value="ECO:0000314"/>
    <property type="project" value="BHF-UCL"/>
</dbReference>
<dbReference type="GO" id="GO:0021541">
    <property type="term" value="P:ammon gyrus development"/>
    <property type="evidence" value="ECO:0000250"/>
    <property type="project" value="BHF-UCL"/>
</dbReference>
<dbReference type="GO" id="GO:0071397">
    <property type="term" value="P:cellular response to cholesterol"/>
    <property type="evidence" value="ECO:0007669"/>
    <property type="project" value="Ensembl"/>
</dbReference>
<dbReference type="GO" id="GO:0071363">
    <property type="term" value="P:cellular response to growth factor stimulus"/>
    <property type="evidence" value="ECO:0007669"/>
    <property type="project" value="Ensembl"/>
</dbReference>
<dbReference type="GO" id="GO:0007268">
    <property type="term" value="P:chemical synaptic transmission"/>
    <property type="evidence" value="ECO:0007669"/>
    <property type="project" value="Ensembl"/>
</dbReference>
<dbReference type="GO" id="GO:0019221">
    <property type="term" value="P:cytokine-mediated signaling pathway"/>
    <property type="evidence" value="ECO:0000303"/>
    <property type="project" value="UniProtKB"/>
</dbReference>
<dbReference type="GO" id="GO:0048813">
    <property type="term" value="P:dendrite morphogenesis"/>
    <property type="evidence" value="ECO:0007669"/>
    <property type="project" value="Ensembl"/>
</dbReference>
<dbReference type="GO" id="GO:0006897">
    <property type="term" value="P:endocytosis"/>
    <property type="evidence" value="ECO:0000314"/>
    <property type="project" value="UniProtKB"/>
</dbReference>
<dbReference type="GO" id="GO:0021819">
    <property type="term" value="P:layer formation in cerebral cortex"/>
    <property type="evidence" value="ECO:0000250"/>
    <property type="project" value="UniProt"/>
</dbReference>
<dbReference type="GO" id="GO:0006629">
    <property type="term" value="P:lipid metabolic process"/>
    <property type="evidence" value="ECO:0000304"/>
    <property type="project" value="ProtInc"/>
</dbReference>
<dbReference type="GO" id="GO:0050804">
    <property type="term" value="P:modulation of chemical synaptic transmission"/>
    <property type="evidence" value="ECO:0000250"/>
    <property type="project" value="BHF-UCL"/>
</dbReference>
<dbReference type="GO" id="GO:1900006">
    <property type="term" value="P:positive regulation of dendrite development"/>
    <property type="evidence" value="ECO:0000250"/>
    <property type="project" value="BHF-UCL"/>
</dbReference>
<dbReference type="GO" id="GO:0061003">
    <property type="term" value="P:positive regulation of dendritic spine morphogenesis"/>
    <property type="evidence" value="ECO:0000250"/>
    <property type="project" value="BHF-UCL"/>
</dbReference>
<dbReference type="GO" id="GO:0006508">
    <property type="term" value="P:proteolysis"/>
    <property type="evidence" value="ECO:0000303"/>
    <property type="project" value="UniProtKB"/>
</dbReference>
<dbReference type="GO" id="GO:0038026">
    <property type="term" value="P:reelin-mediated signaling pathway"/>
    <property type="evidence" value="ECO:0000250"/>
    <property type="project" value="BHF-UCL"/>
</dbReference>
<dbReference type="GO" id="GO:0042981">
    <property type="term" value="P:regulation of apoptotic process"/>
    <property type="evidence" value="ECO:0000250"/>
    <property type="project" value="UniProtKB"/>
</dbReference>
<dbReference type="GO" id="GO:0045088">
    <property type="term" value="P:regulation of innate immune response"/>
    <property type="evidence" value="ECO:0000250"/>
    <property type="project" value="UniProtKB"/>
</dbReference>
<dbReference type="GO" id="GO:0009410">
    <property type="term" value="P:response to xenobiotic stimulus"/>
    <property type="evidence" value="ECO:0007669"/>
    <property type="project" value="Ensembl"/>
</dbReference>
<dbReference type="GO" id="GO:0001523">
    <property type="term" value="P:retinoid metabolic process"/>
    <property type="evidence" value="ECO:0000304"/>
    <property type="project" value="Reactome"/>
</dbReference>
<dbReference type="GO" id="GO:0007165">
    <property type="term" value="P:signal transduction"/>
    <property type="evidence" value="ECO:0000304"/>
    <property type="project" value="ProtInc"/>
</dbReference>
<dbReference type="GO" id="GO:0021517">
    <property type="term" value="P:ventral spinal cord development"/>
    <property type="evidence" value="ECO:0000318"/>
    <property type="project" value="GO_Central"/>
</dbReference>
<dbReference type="CDD" id="cd00054">
    <property type="entry name" value="EGF_CA"/>
    <property type="match status" value="1"/>
</dbReference>
<dbReference type="CDD" id="cd00112">
    <property type="entry name" value="LDLa"/>
    <property type="match status" value="6"/>
</dbReference>
<dbReference type="FunFam" id="4.10.400.10:FF:000162">
    <property type="entry name" value="LDL receptor related protein 8"/>
    <property type="match status" value="1"/>
</dbReference>
<dbReference type="FunFam" id="2.10.25.10:FF:000009">
    <property type="entry name" value="Low-density lipoprotein receptor isoform 1"/>
    <property type="match status" value="1"/>
</dbReference>
<dbReference type="FunFam" id="2.10.25.10:FF:000052">
    <property type="entry name" value="low-density lipoprotein receptor isoform X1"/>
    <property type="match status" value="1"/>
</dbReference>
<dbReference type="FunFam" id="2.120.10.30:FF:000002">
    <property type="entry name" value="low-density lipoprotein receptor isoform X1"/>
    <property type="match status" value="1"/>
</dbReference>
<dbReference type="FunFam" id="4.10.400.10:FF:000136">
    <property type="entry name" value="low-density lipoprotein receptor isoform X5"/>
    <property type="match status" value="1"/>
</dbReference>
<dbReference type="FunFam" id="4.10.400.10:FF:000113">
    <property type="entry name" value="Low-density lipoprotein receptor-related protein 8"/>
    <property type="match status" value="1"/>
</dbReference>
<dbReference type="FunFam" id="4.10.400.10:FF:000138">
    <property type="entry name" value="Low-density lipoprotein receptor-related protein 8"/>
    <property type="match status" value="1"/>
</dbReference>
<dbReference type="FunFam" id="4.10.400.10:FF:000165">
    <property type="entry name" value="low-density lipoprotein receptor-related protein 8 isoform X1"/>
    <property type="match status" value="1"/>
</dbReference>
<dbReference type="FunFam" id="4.10.400.10:FF:000030">
    <property type="entry name" value="Sortilin related receptor 1"/>
    <property type="match status" value="1"/>
</dbReference>
<dbReference type="Gene3D" id="2.10.25.10">
    <property type="entry name" value="Laminin"/>
    <property type="match status" value="3"/>
</dbReference>
<dbReference type="Gene3D" id="4.10.400.10">
    <property type="entry name" value="Low-density Lipoprotein Receptor"/>
    <property type="match status" value="7"/>
</dbReference>
<dbReference type="Gene3D" id="2.120.10.30">
    <property type="entry name" value="TolB, C-terminal domain"/>
    <property type="match status" value="1"/>
</dbReference>
<dbReference type="InterPro" id="IPR011042">
    <property type="entry name" value="6-blade_b-propeller_TolB-like"/>
</dbReference>
<dbReference type="InterPro" id="IPR001881">
    <property type="entry name" value="EGF-like_Ca-bd_dom"/>
</dbReference>
<dbReference type="InterPro" id="IPR000742">
    <property type="entry name" value="EGF-like_dom"/>
</dbReference>
<dbReference type="InterPro" id="IPR000152">
    <property type="entry name" value="EGF-type_Asp/Asn_hydroxyl_site"/>
</dbReference>
<dbReference type="InterPro" id="IPR018097">
    <property type="entry name" value="EGF_Ca-bd_CS"/>
</dbReference>
<dbReference type="InterPro" id="IPR036055">
    <property type="entry name" value="LDL_receptor-like_sf"/>
</dbReference>
<dbReference type="InterPro" id="IPR051221">
    <property type="entry name" value="LDLR-related"/>
</dbReference>
<dbReference type="InterPro" id="IPR023415">
    <property type="entry name" value="LDLR_class-A_CS"/>
</dbReference>
<dbReference type="InterPro" id="IPR000033">
    <property type="entry name" value="LDLR_classB_rpt"/>
</dbReference>
<dbReference type="InterPro" id="IPR002172">
    <property type="entry name" value="LDrepeatLR_classA_rpt"/>
</dbReference>
<dbReference type="InterPro" id="IPR049883">
    <property type="entry name" value="NOTCH1_EGF-like"/>
</dbReference>
<dbReference type="PANTHER" id="PTHR22722:SF15">
    <property type="entry name" value="LOW-DENSITY LIPOPROTEIN RECEPTOR-RELATED"/>
    <property type="match status" value="1"/>
</dbReference>
<dbReference type="PANTHER" id="PTHR22722">
    <property type="entry name" value="LOW-DENSITY LIPOPROTEIN RECEPTOR-RELATED PROTEIN 2-RELATED"/>
    <property type="match status" value="1"/>
</dbReference>
<dbReference type="Pfam" id="PF07645">
    <property type="entry name" value="EGF_CA"/>
    <property type="match status" value="1"/>
</dbReference>
<dbReference type="Pfam" id="PF14670">
    <property type="entry name" value="FXa_inhibition"/>
    <property type="match status" value="1"/>
</dbReference>
<dbReference type="Pfam" id="PF00057">
    <property type="entry name" value="Ldl_recept_a"/>
    <property type="match status" value="7"/>
</dbReference>
<dbReference type="Pfam" id="PF00058">
    <property type="entry name" value="Ldl_recept_b"/>
    <property type="match status" value="5"/>
</dbReference>
<dbReference type="PRINTS" id="PR00261">
    <property type="entry name" value="LDLRECEPTOR"/>
</dbReference>
<dbReference type="SMART" id="SM00181">
    <property type="entry name" value="EGF"/>
    <property type="match status" value="4"/>
</dbReference>
<dbReference type="SMART" id="SM00179">
    <property type="entry name" value="EGF_CA"/>
    <property type="match status" value="2"/>
</dbReference>
<dbReference type="SMART" id="SM00192">
    <property type="entry name" value="LDLa"/>
    <property type="match status" value="7"/>
</dbReference>
<dbReference type="SMART" id="SM00135">
    <property type="entry name" value="LY"/>
    <property type="match status" value="5"/>
</dbReference>
<dbReference type="SUPFAM" id="SSF57196">
    <property type="entry name" value="EGF/Laminin"/>
    <property type="match status" value="3"/>
</dbReference>
<dbReference type="SUPFAM" id="SSF57424">
    <property type="entry name" value="LDL receptor-like module"/>
    <property type="match status" value="7"/>
</dbReference>
<dbReference type="SUPFAM" id="SSF63825">
    <property type="entry name" value="YWTD domain"/>
    <property type="match status" value="1"/>
</dbReference>
<dbReference type="PROSITE" id="PS00010">
    <property type="entry name" value="ASX_HYDROXYL"/>
    <property type="match status" value="2"/>
</dbReference>
<dbReference type="PROSITE" id="PS01186">
    <property type="entry name" value="EGF_2"/>
    <property type="match status" value="2"/>
</dbReference>
<dbReference type="PROSITE" id="PS50026">
    <property type="entry name" value="EGF_3"/>
    <property type="match status" value="2"/>
</dbReference>
<dbReference type="PROSITE" id="PS01187">
    <property type="entry name" value="EGF_CA"/>
    <property type="match status" value="1"/>
</dbReference>
<dbReference type="PROSITE" id="PS01209">
    <property type="entry name" value="LDLRA_1"/>
    <property type="match status" value="7"/>
</dbReference>
<dbReference type="PROSITE" id="PS50068">
    <property type="entry name" value="LDLRA_2"/>
    <property type="match status" value="7"/>
</dbReference>
<dbReference type="PROSITE" id="PS51120">
    <property type="entry name" value="LDLRB"/>
    <property type="match status" value="5"/>
</dbReference>
<evidence type="ECO:0000250" key="1"/>
<evidence type="ECO:0000250" key="2">
    <source>
        <dbReference type="UniProtKB" id="Q924X6"/>
    </source>
</evidence>
<evidence type="ECO:0000255" key="3"/>
<evidence type="ECO:0000255" key="4">
    <source>
        <dbReference type="PROSITE-ProRule" id="PRU00076"/>
    </source>
</evidence>
<evidence type="ECO:0000255" key="5">
    <source>
        <dbReference type="PROSITE-ProRule" id="PRU00124"/>
    </source>
</evidence>
<evidence type="ECO:0000256" key="6">
    <source>
        <dbReference type="SAM" id="MobiDB-lite"/>
    </source>
</evidence>
<evidence type="ECO:0000269" key="7">
    <source>
    </source>
</evidence>
<evidence type="ECO:0000269" key="8">
    <source>
    </source>
</evidence>
<evidence type="ECO:0000269" key="9">
    <source>
    </source>
</evidence>
<evidence type="ECO:0000269" key="10">
    <source>
    </source>
</evidence>
<evidence type="ECO:0000269" key="11">
    <source>
    </source>
</evidence>
<evidence type="ECO:0000269" key="12">
    <source>
    </source>
</evidence>
<evidence type="ECO:0000269" key="13">
    <source>
    </source>
</evidence>
<evidence type="ECO:0000269" key="14">
    <source>
    </source>
</evidence>
<evidence type="ECO:0000269" key="15">
    <source>
    </source>
</evidence>
<evidence type="ECO:0000269" key="16">
    <source>
    </source>
</evidence>
<evidence type="ECO:0000269" key="17">
    <source>
    </source>
</evidence>
<evidence type="ECO:0000269" key="18">
    <source>
    </source>
</evidence>
<evidence type="ECO:0000269" key="19">
    <source>
    </source>
</evidence>
<evidence type="ECO:0000269" key="20">
    <source>
    </source>
</evidence>
<evidence type="ECO:0000269" key="21">
    <source>
    </source>
</evidence>
<evidence type="ECO:0000269" key="22">
    <source>
    </source>
</evidence>
<evidence type="ECO:0000269" key="23">
    <source>
    </source>
</evidence>
<evidence type="ECO:0000269" key="24">
    <source>
    </source>
</evidence>
<evidence type="ECO:0000269" key="25">
    <source>
    </source>
</evidence>
<evidence type="ECO:0000303" key="26">
    <source>
    </source>
</evidence>
<evidence type="ECO:0000303" key="27">
    <source>
    </source>
</evidence>
<evidence type="ECO:0000305" key="28"/>
<evidence type="ECO:0007744" key="29">
    <source>
        <dbReference type="PDB" id="3A7Q"/>
    </source>
</evidence>
<evidence type="ECO:0007829" key="30">
    <source>
        <dbReference type="PDB" id="5B4X"/>
    </source>
</evidence>
<evidence type="ECO:0007829" key="31">
    <source>
        <dbReference type="PDB" id="5B4Y"/>
    </source>
</evidence>
<evidence type="ECO:0007829" key="32">
    <source>
        <dbReference type="PDB" id="7UCX"/>
    </source>
</evidence>
<accession>Q14114</accession>
<accession>B1AMT6</accession>
<accession>B1AMT7</accession>
<accession>B1AMT8</accession>
<accession>O14968</accession>
<accession>Q86V27</accession>
<accession>Q99876</accession>
<accession>Q9BR78</accession>
<gene>
    <name type="primary">LRP8</name>
    <name type="synonym">APOER2</name>
</gene>
<name>LRP8_HUMAN</name>
<organism>
    <name type="scientific">Homo sapiens</name>
    <name type="common">Human</name>
    <dbReference type="NCBI Taxonomy" id="9606"/>
    <lineage>
        <taxon>Eukaryota</taxon>
        <taxon>Metazoa</taxon>
        <taxon>Chordata</taxon>
        <taxon>Craniata</taxon>
        <taxon>Vertebrata</taxon>
        <taxon>Euteleostomi</taxon>
        <taxon>Mammalia</taxon>
        <taxon>Eutheria</taxon>
        <taxon>Euarchontoglires</taxon>
        <taxon>Primates</taxon>
        <taxon>Haplorrhini</taxon>
        <taxon>Catarrhini</taxon>
        <taxon>Hominidae</taxon>
        <taxon>Homo</taxon>
    </lineage>
</organism>